<dbReference type="EC" id="3.6.4.12"/>
<dbReference type="EMBL" id="CH408031">
    <property type="protein sequence ID" value="EAQ89171.1"/>
    <property type="molecule type" value="Genomic_DNA"/>
</dbReference>
<dbReference type="RefSeq" id="XP_001221885.1">
    <property type="nucleotide sequence ID" value="XM_001221884.1"/>
</dbReference>
<dbReference type="SMR" id="Q2H6C5"/>
<dbReference type="FunCoup" id="Q2H6C5">
    <property type="interactions" value="110"/>
</dbReference>
<dbReference type="STRING" id="306901.Q2H6C5"/>
<dbReference type="GeneID" id="4390172"/>
<dbReference type="VEuPathDB" id="FungiDB:CHGG_05790"/>
<dbReference type="eggNOG" id="KOG2326">
    <property type="taxonomic scope" value="Eukaryota"/>
</dbReference>
<dbReference type="HOGENOM" id="CLU_010975_1_1_1"/>
<dbReference type="InParanoid" id="Q2H6C5"/>
<dbReference type="OMA" id="WAMQYVW"/>
<dbReference type="OrthoDB" id="30826at2759"/>
<dbReference type="Proteomes" id="UP000001056">
    <property type="component" value="Unassembled WGS sequence"/>
</dbReference>
<dbReference type="GO" id="GO:0000781">
    <property type="term" value="C:chromosome, telomeric region"/>
    <property type="evidence" value="ECO:0007669"/>
    <property type="project" value="UniProtKB-SubCell"/>
</dbReference>
<dbReference type="GO" id="GO:0043564">
    <property type="term" value="C:Ku70:Ku80 complex"/>
    <property type="evidence" value="ECO:0007669"/>
    <property type="project" value="InterPro"/>
</dbReference>
<dbReference type="GO" id="GO:0005524">
    <property type="term" value="F:ATP binding"/>
    <property type="evidence" value="ECO:0007669"/>
    <property type="project" value="UniProtKB-KW"/>
</dbReference>
<dbReference type="GO" id="GO:0016887">
    <property type="term" value="F:ATP hydrolysis activity"/>
    <property type="evidence" value="ECO:0007669"/>
    <property type="project" value="RHEA"/>
</dbReference>
<dbReference type="GO" id="GO:0003684">
    <property type="term" value="F:damaged DNA binding"/>
    <property type="evidence" value="ECO:0007669"/>
    <property type="project" value="InterPro"/>
</dbReference>
<dbReference type="GO" id="GO:0003690">
    <property type="term" value="F:double-stranded DNA binding"/>
    <property type="evidence" value="ECO:0007669"/>
    <property type="project" value="TreeGrafter"/>
</dbReference>
<dbReference type="GO" id="GO:0004386">
    <property type="term" value="F:helicase activity"/>
    <property type="evidence" value="ECO:0007669"/>
    <property type="project" value="UniProtKB-KW"/>
</dbReference>
<dbReference type="GO" id="GO:0042162">
    <property type="term" value="F:telomeric DNA binding"/>
    <property type="evidence" value="ECO:0007669"/>
    <property type="project" value="InterPro"/>
</dbReference>
<dbReference type="GO" id="GO:0006310">
    <property type="term" value="P:DNA recombination"/>
    <property type="evidence" value="ECO:0007669"/>
    <property type="project" value="UniProtKB-KW"/>
</dbReference>
<dbReference type="GO" id="GO:0006303">
    <property type="term" value="P:double-strand break repair via nonhomologous end joining"/>
    <property type="evidence" value="ECO:0007669"/>
    <property type="project" value="InterPro"/>
</dbReference>
<dbReference type="GO" id="GO:0000723">
    <property type="term" value="P:telomere maintenance"/>
    <property type="evidence" value="ECO:0007669"/>
    <property type="project" value="InterPro"/>
</dbReference>
<dbReference type="CDD" id="cd00873">
    <property type="entry name" value="KU80"/>
    <property type="match status" value="1"/>
</dbReference>
<dbReference type="FunFam" id="2.40.290.10:FF:000008">
    <property type="entry name" value="ATP-dependent DNA helicase II subunit 2"/>
    <property type="match status" value="1"/>
</dbReference>
<dbReference type="FunFam" id="3.40.50.410:FF:000073">
    <property type="entry name" value="ATP-dependent DNA helicase II subunit 2"/>
    <property type="match status" value="1"/>
</dbReference>
<dbReference type="FunFam" id="1.10.1600.10:FF:000002">
    <property type="entry name" value="X-ray repair cross-complementing protein 5"/>
    <property type="match status" value="1"/>
</dbReference>
<dbReference type="Gene3D" id="1.10.1600.10">
    <property type="match status" value="1"/>
</dbReference>
<dbReference type="Gene3D" id="2.40.290.10">
    <property type="match status" value="1"/>
</dbReference>
<dbReference type="Gene3D" id="1.25.40.240">
    <property type="entry name" value="Ku, C-terminal domain"/>
    <property type="match status" value="1"/>
</dbReference>
<dbReference type="Gene3D" id="3.40.50.410">
    <property type="entry name" value="von Willebrand factor, type A domain"/>
    <property type="match status" value="1"/>
</dbReference>
<dbReference type="InterPro" id="IPR006164">
    <property type="entry name" value="Ku70/Ku80_beta-barrel_dom"/>
</dbReference>
<dbReference type="InterPro" id="IPR024193">
    <property type="entry name" value="Ku80"/>
</dbReference>
<dbReference type="InterPro" id="IPR036494">
    <property type="entry name" value="Ku_C_sf"/>
</dbReference>
<dbReference type="InterPro" id="IPR005161">
    <property type="entry name" value="Ku_N"/>
</dbReference>
<dbReference type="InterPro" id="IPR014893">
    <property type="entry name" value="Ku_PK_bind"/>
</dbReference>
<dbReference type="InterPro" id="IPR016194">
    <property type="entry name" value="SPOC-like_C_dom_sf"/>
</dbReference>
<dbReference type="InterPro" id="IPR036465">
    <property type="entry name" value="vWFA_dom_sf"/>
</dbReference>
<dbReference type="PANTHER" id="PTHR12604">
    <property type="entry name" value="KU AUTOANTIGEN DNA HELICASE"/>
    <property type="match status" value="1"/>
</dbReference>
<dbReference type="PANTHER" id="PTHR12604:SF4">
    <property type="entry name" value="X-RAY REPAIR CROSS-COMPLEMENTING PROTEIN 5"/>
    <property type="match status" value="1"/>
</dbReference>
<dbReference type="Pfam" id="PF02735">
    <property type="entry name" value="Ku"/>
    <property type="match status" value="1"/>
</dbReference>
<dbReference type="Pfam" id="PF03731">
    <property type="entry name" value="Ku_N"/>
    <property type="match status" value="1"/>
</dbReference>
<dbReference type="Pfam" id="PF08785">
    <property type="entry name" value="Ku_PK_bind"/>
    <property type="match status" value="1"/>
</dbReference>
<dbReference type="PIRSF" id="PIRSF016570">
    <property type="entry name" value="Ku80"/>
    <property type="match status" value="1"/>
</dbReference>
<dbReference type="SMART" id="SM00559">
    <property type="entry name" value="Ku78"/>
    <property type="match status" value="1"/>
</dbReference>
<dbReference type="SUPFAM" id="SSF101420">
    <property type="entry name" value="C-terminal domain of Ku80"/>
    <property type="match status" value="1"/>
</dbReference>
<dbReference type="SUPFAM" id="SSF100939">
    <property type="entry name" value="SPOC domain-like"/>
    <property type="match status" value="1"/>
</dbReference>
<dbReference type="SUPFAM" id="SSF53300">
    <property type="entry name" value="vWA-like"/>
    <property type="match status" value="1"/>
</dbReference>
<evidence type="ECO:0000250" key="1"/>
<evidence type="ECO:0000256" key="2">
    <source>
        <dbReference type="SAM" id="MobiDB-lite"/>
    </source>
</evidence>
<evidence type="ECO:0000305" key="3"/>
<protein>
    <recommendedName>
        <fullName>ATP-dependent DNA helicase II subunit 2</fullName>
        <ecNumber>3.6.4.12</ecNumber>
    </recommendedName>
    <alternativeName>
        <fullName>ATP-dependent DNA helicase II subunit Ku80</fullName>
    </alternativeName>
</protein>
<sequence length="736" mass="81825">MADKEATVYIVDLGESMADCHNGRDESDLDFGMRYVWDKISTTVAASRKTWTLGVVGLNTEETNNAQDSEGLEGYEHISVLQDIGPMTMTQLRELRSSIQTSHTYGGDAISGIVVALAMIELFTKKLKYNRRIILVTNGESPIDDESSEDVANRLNYSNIELIVIGVDFDDADYGFKEEDKSKGKARNEKTLRKLVEQCNNGVFGTMQQAVEELAIPRIKPVRPFKAYDGALTLGDPEKYKSALSIHVERYFKTKRAPAPPASTVVVNSEPGGASQSETLNEDTEMGDAEFSGVKHMRTYRVNDPDAPGGKRDVEFEDLAKGYQYGRTVVPFSESDFSITKLETKKSFTILGFIPFSSYNPFLNLGETGIVVAQKHNEEAELGLSALIHALHELESYAVARYVQKDGAQPQLVLLKPNPAIEDDFECLYDVPLPFAEDLRSYQFPPLDKVLTVTGNIIKEHRLLPSEDLKQAMSDFVDAMDLSGFDVDEDGKPTEYAPIDETYNPTIHRMNQAIRARAVDPDAPIKPPAEILLRFSKPPEKLIEKAKPEIEALIDAAEIKKVPAKAQGRGSRKEPVKPLSGLDIDSLLGESKRTTISLDNAVPEFKQILATAADDATIESAAKQMGQIVRKLIQDSFADLFYARAAENLRVMREELISLEVPGLYNKFLTGLKKSILSGELDGDRREMWFKHIVGGHLSLITQDESEVSEVTAEEAKALCAWSRPNITYRYFRDTA</sequence>
<reference key="1">
    <citation type="journal article" date="2015" name="Genome Announc.">
        <title>Draft genome sequence of the cellulolytic fungus Chaetomium globosum.</title>
        <authorList>
            <person name="Cuomo C.A."/>
            <person name="Untereiner W.A."/>
            <person name="Ma L.-J."/>
            <person name="Grabherr M."/>
            <person name="Birren B.W."/>
        </authorList>
    </citation>
    <scope>NUCLEOTIDE SEQUENCE [LARGE SCALE GENOMIC DNA]</scope>
    <source>
        <strain>ATCC 6205 / CBS 148.51 / DSM 1962 / NBRC 6347 / NRRL 1970</strain>
    </source>
</reference>
<keyword id="KW-0067">ATP-binding</keyword>
<keyword id="KW-0158">Chromosome</keyword>
<keyword id="KW-0227">DNA damage</keyword>
<keyword id="KW-0233">DNA recombination</keyword>
<keyword id="KW-0234">DNA repair</keyword>
<keyword id="KW-0238">DNA-binding</keyword>
<keyword id="KW-0347">Helicase</keyword>
<keyword id="KW-0378">Hydrolase</keyword>
<keyword id="KW-0547">Nucleotide-binding</keyword>
<keyword id="KW-0539">Nucleus</keyword>
<keyword id="KW-1185">Reference proteome</keyword>
<keyword id="KW-0779">Telomere</keyword>
<comment type="function">
    <text evidence="1">Single-stranded DNA-dependent ATP-dependent helicase. Involved in non-homologous end joining (NHEJ) DNA double strand break repair. DNA-binding is sequence-independent but has a high affinity to nicks in double-stranded DNA and to the ends of duplex DNA. Binds to naturally occurring chromosomal ends, and therefore provides chromosomal end protection. Required also for telomere recombination to repair telomeric ends in the absence of telomerase. KU70, of the KU70/KU80 heterodimer, binds to the stem loop of TLC1, the RNA component of telomerase. Involved in telomere maintenance. Interacts with telomeric repeats and subtelomeric sequences thereby controlling telomere length and protecting against subtelomeric rearrangement. Maintains telomeric chromatin, which is involved in silencing the expression of genes located at the telomere. Required for mating-type switching (By similarity).</text>
</comment>
<comment type="catalytic activity">
    <reaction>
        <text>ATP + H2O = ADP + phosphate + H(+)</text>
        <dbReference type="Rhea" id="RHEA:13065"/>
        <dbReference type="ChEBI" id="CHEBI:15377"/>
        <dbReference type="ChEBI" id="CHEBI:15378"/>
        <dbReference type="ChEBI" id="CHEBI:30616"/>
        <dbReference type="ChEBI" id="CHEBI:43474"/>
        <dbReference type="ChEBI" id="CHEBI:456216"/>
        <dbReference type="EC" id="3.6.4.12"/>
    </reaction>
</comment>
<comment type="subunit">
    <text evidence="1">Heterodimer of Ku70 and Ku80.</text>
</comment>
<comment type="subcellular location">
    <subcellularLocation>
        <location evidence="1">Nucleus</location>
    </subcellularLocation>
    <subcellularLocation>
        <location evidence="1">Chromosome</location>
        <location evidence="1">Telomere</location>
    </subcellularLocation>
</comment>
<comment type="similarity">
    <text evidence="3">Belongs to the ku80 family.</text>
</comment>
<feature type="chain" id="PRO_0000278351" description="ATP-dependent DNA helicase II subunit 2">
    <location>
        <begin position="1"/>
        <end position="736"/>
    </location>
</feature>
<feature type="domain" description="Ku">
    <location>
        <begin position="232"/>
        <end position="479"/>
    </location>
</feature>
<feature type="region of interest" description="Disordered" evidence="2">
    <location>
        <begin position="261"/>
        <end position="286"/>
    </location>
</feature>
<organism>
    <name type="scientific">Chaetomium globosum (strain ATCC 6205 / CBS 148.51 / DSM 1962 / NBRC 6347 / NRRL 1970)</name>
    <name type="common">Soil fungus</name>
    <dbReference type="NCBI Taxonomy" id="306901"/>
    <lineage>
        <taxon>Eukaryota</taxon>
        <taxon>Fungi</taxon>
        <taxon>Dikarya</taxon>
        <taxon>Ascomycota</taxon>
        <taxon>Pezizomycotina</taxon>
        <taxon>Sordariomycetes</taxon>
        <taxon>Sordariomycetidae</taxon>
        <taxon>Sordariales</taxon>
        <taxon>Chaetomiaceae</taxon>
        <taxon>Chaetomium</taxon>
    </lineage>
</organism>
<accession>Q2H6C5</accession>
<name>KU80_CHAGB</name>
<proteinExistence type="inferred from homology"/>
<gene>
    <name type="primary">KU80</name>
    <name type="ORF">CHGG_05790</name>
</gene>